<geneLocation type="mitochondrion"/>
<dbReference type="EMBL" id="AB106588">
    <property type="protein sequence ID" value="BAC77794.1"/>
    <property type="molecule type" value="Genomic_DNA"/>
</dbReference>
<dbReference type="SMR" id="Q7Y8L9"/>
<dbReference type="GO" id="GO:0005743">
    <property type="term" value="C:mitochondrial inner membrane"/>
    <property type="evidence" value="ECO:0007669"/>
    <property type="project" value="UniProtKB-SubCell"/>
</dbReference>
<dbReference type="GO" id="GO:0045275">
    <property type="term" value="C:respiratory chain complex III"/>
    <property type="evidence" value="ECO:0007669"/>
    <property type="project" value="InterPro"/>
</dbReference>
<dbReference type="GO" id="GO:0046872">
    <property type="term" value="F:metal ion binding"/>
    <property type="evidence" value="ECO:0007669"/>
    <property type="project" value="UniProtKB-KW"/>
</dbReference>
<dbReference type="GO" id="GO:0008121">
    <property type="term" value="F:ubiquinol-cytochrome-c reductase activity"/>
    <property type="evidence" value="ECO:0007669"/>
    <property type="project" value="InterPro"/>
</dbReference>
<dbReference type="GO" id="GO:0006122">
    <property type="term" value="P:mitochondrial electron transport, ubiquinol to cytochrome c"/>
    <property type="evidence" value="ECO:0007669"/>
    <property type="project" value="TreeGrafter"/>
</dbReference>
<dbReference type="CDD" id="cd00290">
    <property type="entry name" value="cytochrome_b_C"/>
    <property type="match status" value="1"/>
</dbReference>
<dbReference type="CDD" id="cd00284">
    <property type="entry name" value="Cytochrome_b_N"/>
    <property type="match status" value="1"/>
</dbReference>
<dbReference type="FunFam" id="1.20.810.10:FF:000002">
    <property type="entry name" value="Cytochrome b"/>
    <property type="match status" value="1"/>
</dbReference>
<dbReference type="Gene3D" id="1.20.810.10">
    <property type="entry name" value="Cytochrome Bc1 Complex, Chain C"/>
    <property type="match status" value="1"/>
</dbReference>
<dbReference type="InterPro" id="IPR005798">
    <property type="entry name" value="Cyt_b/b6_C"/>
</dbReference>
<dbReference type="InterPro" id="IPR036150">
    <property type="entry name" value="Cyt_b/b6_C_sf"/>
</dbReference>
<dbReference type="InterPro" id="IPR005797">
    <property type="entry name" value="Cyt_b/b6_N"/>
</dbReference>
<dbReference type="InterPro" id="IPR027387">
    <property type="entry name" value="Cytb/b6-like_sf"/>
</dbReference>
<dbReference type="InterPro" id="IPR030689">
    <property type="entry name" value="Cytochrome_b"/>
</dbReference>
<dbReference type="InterPro" id="IPR048260">
    <property type="entry name" value="Cytochrome_b_C_euk/bac"/>
</dbReference>
<dbReference type="InterPro" id="IPR048259">
    <property type="entry name" value="Cytochrome_b_N_euk/bac"/>
</dbReference>
<dbReference type="InterPro" id="IPR016174">
    <property type="entry name" value="Di-haem_cyt_TM"/>
</dbReference>
<dbReference type="PANTHER" id="PTHR19271">
    <property type="entry name" value="CYTOCHROME B"/>
    <property type="match status" value="1"/>
</dbReference>
<dbReference type="PANTHER" id="PTHR19271:SF16">
    <property type="entry name" value="CYTOCHROME B"/>
    <property type="match status" value="1"/>
</dbReference>
<dbReference type="Pfam" id="PF00032">
    <property type="entry name" value="Cytochrom_B_C"/>
    <property type="match status" value="1"/>
</dbReference>
<dbReference type="Pfam" id="PF00033">
    <property type="entry name" value="Cytochrome_B"/>
    <property type="match status" value="1"/>
</dbReference>
<dbReference type="PIRSF" id="PIRSF038885">
    <property type="entry name" value="COB"/>
    <property type="match status" value="1"/>
</dbReference>
<dbReference type="SUPFAM" id="SSF81648">
    <property type="entry name" value="a domain/subunit of cytochrome bc1 complex (Ubiquinol-cytochrome c reductase)"/>
    <property type="match status" value="1"/>
</dbReference>
<dbReference type="SUPFAM" id="SSF81342">
    <property type="entry name" value="Transmembrane di-heme cytochromes"/>
    <property type="match status" value="1"/>
</dbReference>
<dbReference type="PROSITE" id="PS51003">
    <property type="entry name" value="CYTB_CTER"/>
    <property type="match status" value="1"/>
</dbReference>
<dbReference type="PROSITE" id="PS51002">
    <property type="entry name" value="CYTB_NTER"/>
    <property type="match status" value="1"/>
</dbReference>
<organism>
    <name type="scientific">Myotis chinensis</name>
    <name type="common">Large mouse-eared bat</name>
    <dbReference type="NCBI Taxonomy" id="225399"/>
    <lineage>
        <taxon>Eukaryota</taxon>
        <taxon>Metazoa</taxon>
        <taxon>Chordata</taxon>
        <taxon>Craniata</taxon>
        <taxon>Vertebrata</taxon>
        <taxon>Euteleostomi</taxon>
        <taxon>Mammalia</taxon>
        <taxon>Eutheria</taxon>
        <taxon>Laurasiatheria</taxon>
        <taxon>Chiroptera</taxon>
        <taxon>Yangochiroptera</taxon>
        <taxon>Vespertilionidae</taxon>
        <taxon>Myotis</taxon>
    </lineage>
</organism>
<name>CYB_MYOCH</name>
<gene>
    <name type="primary">MT-CYB</name>
    <name type="synonym">COB</name>
    <name type="synonym">CYTB</name>
    <name type="synonym">MTCYB</name>
</gene>
<proteinExistence type="inferred from homology"/>
<keyword id="KW-0249">Electron transport</keyword>
<keyword id="KW-0349">Heme</keyword>
<keyword id="KW-0408">Iron</keyword>
<keyword id="KW-0472">Membrane</keyword>
<keyword id="KW-0479">Metal-binding</keyword>
<keyword id="KW-0496">Mitochondrion</keyword>
<keyword id="KW-0999">Mitochondrion inner membrane</keyword>
<keyword id="KW-0679">Respiratory chain</keyword>
<keyword id="KW-0812">Transmembrane</keyword>
<keyword id="KW-1133">Transmembrane helix</keyword>
<keyword id="KW-0813">Transport</keyword>
<keyword id="KW-0830">Ubiquinone</keyword>
<feature type="chain" id="PRO_0000061234" description="Cytochrome b">
    <location>
        <begin position="1"/>
        <end position="379"/>
    </location>
</feature>
<feature type="transmembrane region" description="Helical" evidence="2">
    <location>
        <begin position="33"/>
        <end position="53"/>
    </location>
</feature>
<feature type="transmembrane region" description="Helical" evidence="2">
    <location>
        <begin position="77"/>
        <end position="98"/>
    </location>
</feature>
<feature type="transmembrane region" description="Helical" evidence="2">
    <location>
        <begin position="113"/>
        <end position="133"/>
    </location>
</feature>
<feature type="transmembrane region" description="Helical" evidence="2">
    <location>
        <begin position="178"/>
        <end position="198"/>
    </location>
</feature>
<feature type="transmembrane region" description="Helical" evidence="2">
    <location>
        <begin position="226"/>
        <end position="246"/>
    </location>
</feature>
<feature type="transmembrane region" description="Helical" evidence="2">
    <location>
        <begin position="288"/>
        <end position="308"/>
    </location>
</feature>
<feature type="transmembrane region" description="Helical" evidence="2">
    <location>
        <begin position="320"/>
        <end position="340"/>
    </location>
</feature>
<feature type="transmembrane region" description="Helical" evidence="2">
    <location>
        <begin position="347"/>
        <end position="367"/>
    </location>
</feature>
<feature type="binding site" description="axial binding residue" evidence="2">
    <location>
        <position position="83"/>
    </location>
    <ligand>
        <name>heme b</name>
        <dbReference type="ChEBI" id="CHEBI:60344"/>
        <label>b562</label>
    </ligand>
    <ligandPart>
        <name>Fe</name>
        <dbReference type="ChEBI" id="CHEBI:18248"/>
    </ligandPart>
</feature>
<feature type="binding site" description="axial binding residue" evidence="2">
    <location>
        <position position="97"/>
    </location>
    <ligand>
        <name>heme b</name>
        <dbReference type="ChEBI" id="CHEBI:60344"/>
        <label>b566</label>
    </ligand>
    <ligandPart>
        <name>Fe</name>
        <dbReference type="ChEBI" id="CHEBI:18248"/>
    </ligandPart>
</feature>
<feature type="binding site" description="axial binding residue" evidence="2">
    <location>
        <position position="182"/>
    </location>
    <ligand>
        <name>heme b</name>
        <dbReference type="ChEBI" id="CHEBI:60344"/>
        <label>b562</label>
    </ligand>
    <ligandPart>
        <name>Fe</name>
        <dbReference type="ChEBI" id="CHEBI:18248"/>
    </ligandPart>
</feature>
<feature type="binding site" description="axial binding residue" evidence="2">
    <location>
        <position position="196"/>
    </location>
    <ligand>
        <name>heme b</name>
        <dbReference type="ChEBI" id="CHEBI:60344"/>
        <label>b566</label>
    </ligand>
    <ligandPart>
        <name>Fe</name>
        <dbReference type="ChEBI" id="CHEBI:18248"/>
    </ligandPart>
</feature>
<feature type="binding site" evidence="2">
    <location>
        <position position="201"/>
    </location>
    <ligand>
        <name>a ubiquinone</name>
        <dbReference type="ChEBI" id="CHEBI:16389"/>
    </ligand>
</feature>
<accession>Q7Y8L9</accession>
<sequence>MTNIRKSHPLMKIINNSFIDLPAPSNISSWWNFGSLLGICLALQILTGLFLAMHYTSDTATAFNSVTHICRDVNYGWVLRYLHANGASMFFICLYLHVGRGLYYGSYMYTETWNIGIILLFAVMATAFMGYVLPWGQMSFWGATVITNLLSAIPYIGTNLVEWIWGGFSVDKATLTRFFAFHFLLPFIISAMVMVHLLFLHETGSNNPTGIPSNMDMIPFHPYYTIKDILGLLLMITVLLMLVLFSPDMLGDPDNYMPANPLNTPPHIKPEWYFLFAYAILRSIPNKLGGVLALVLSILILIIIPLLHTSKQRSMTFRPLSQCLFWLLTADLLTLTWIGGQPVEHPYVIIGQLASILYFSIIIILMPLTSLVENHLLKW</sequence>
<protein>
    <recommendedName>
        <fullName>Cytochrome b</fullName>
    </recommendedName>
    <alternativeName>
        <fullName>Complex III subunit 3</fullName>
    </alternativeName>
    <alternativeName>
        <fullName>Complex III subunit III</fullName>
    </alternativeName>
    <alternativeName>
        <fullName>Cytochrome b-c1 complex subunit 3</fullName>
    </alternativeName>
    <alternativeName>
        <fullName>Ubiquinol-cytochrome-c reductase complex cytochrome b subunit</fullName>
    </alternativeName>
</protein>
<comment type="function">
    <text evidence="2">Component of the ubiquinol-cytochrome c reductase complex (complex III or cytochrome b-c1 complex) that is part of the mitochondrial respiratory chain. The b-c1 complex mediates electron transfer from ubiquinol to cytochrome c. Contributes to the generation of a proton gradient across the mitochondrial membrane that is then used for ATP synthesis.</text>
</comment>
<comment type="cofactor">
    <cofactor evidence="2">
        <name>heme b</name>
        <dbReference type="ChEBI" id="CHEBI:60344"/>
    </cofactor>
    <text evidence="2">Binds 2 heme b groups non-covalently.</text>
</comment>
<comment type="subunit">
    <text evidence="2">The cytochrome bc1 complex contains 11 subunits: 3 respiratory subunits (MT-CYB, CYC1 and UQCRFS1), 2 core proteins (UQCRC1 and UQCRC2) and 6 low-molecular weight proteins (UQCRH/QCR6, UQCRB/QCR7, UQCRQ/QCR8, UQCR10/QCR9, UQCR11/QCR10 and a cleavage product of UQCRFS1). This cytochrome bc1 complex then forms a dimer.</text>
</comment>
<comment type="subcellular location">
    <subcellularLocation>
        <location evidence="2">Mitochondrion inner membrane</location>
        <topology evidence="2">Multi-pass membrane protein</topology>
    </subcellularLocation>
</comment>
<comment type="miscellaneous">
    <text evidence="1">Heme 1 (or BL or b562) is low-potential and absorbs at about 562 nm, and heme 2 (or BH or b566) is high-potential and absorbs at about 566 nm.</text>
</comment>
<comment type="similarity">
    <text evidence="3 4">Belongs to the cytochrome b family.</text>
</comment>
<comment type="caution">
    <text evidence="2">The full-length protein contains only eight transmembrane helices, not nine as predicted by bioinformatics tools.</text>
</comment>
<reference key="1">
    <citation type="journal article" date="2003" name="Mol. Phylogenet. Evol.">
        <title>The status of the Japanese and East Asian bats of the genus Myotis (Vespertilionidae) based on mitochondrial sequences.</title>
        <authorList>
            <person name="Kawai K."/>
            <person name="Nikaido M."/>
            <person name="Harada M."/>
            <person name="Matsumura S."/>
            <person name="Lin L."/>
            <person name="Wu Y."/>
            <person name="Hasegawa M."/>
            <person name="Okada N."/>
        </authorList>
    </citation>
    <scope>NUCLEOTIDE SEQUENCE [GENOMIC DNA]</scope>
</reference>
<evidence type="ECO:0000250" key="1"/>
<evidence type="ECO:0000250" key="2">
    <source>
        <dbReference type="UniProtKB" id="P00157"/>
    </source>
</evidence>
<evidence type="ECO:0000255" key="3">
    <source>
        <dbReference type="PROSITE-ProRule" id="PRU00967"/>
    </source>
</evidence>
<evidence type="ECO:0000255" key="4">
    <source>
        <dbReference type="PROSITE-ProRule" id="PRU00968"/>
    </source>
</evidence>